<dbReference type="EC" id="1.14.19.41" evidence="1"/>
<dbReference type="EMBL" id="AC005727">
    <property type="protein sequence ID" value="AAC79589.1"/>
    <property type="molecule type" value="Genomic_DNA"/>
</dbReference>
<dbReference type="EMBL" id="CP002685">
    <property type="protein sequence ID" value="AEC08181.1"/>
    <property type="molecule type" value="Genomic_DNA"/>
</dbReference>
<dbReference type="PIR" id="F84689">
    <property type="entry name" value="F84689"/>
</dbReference>
<dbReference type="RefSeq" id="NP_180451.1">
    <property type="nucleotide sequence ID" value="NM_128444.2"/>
</dbReference>
<dbReference type="SMR" id="Q9ZV29"/>
<dbReference type="FunCoup" id="Q9ZV29">
    <property type="interactions" value="910"/>
</dbReference>
<dbReference type="STRING" id="3702.Q9ZV29"/>
<dbReference type="PaxDb" id="3702-AT2G28850.1"/>
<dbReference type="ProteomicsDB" id="240566"/>
<dbReference type="EnsemblPlants" id="AT2G28850.1">
    <property type="protein sequence ID" value="AT2G28850.1"/>
    <property type="gene ID" value="AT2G28850"/>
</dbReference>
<dbReference type="GeneID" id="817434"/>
<dbReference type="Gramene" id="AT2G28850.1">
    <property type="protein sequence ID" value="AT2G28850.1"/>
    <property type="gene ID" value="AT2G28850"/>
</dbReference>
<dbReference type="KEGG" id="ath:AT2G28850"/>
<dbReference type="Araport" id="AT2G28850"/>
<dbReference type="TAIR" id="AT2G28850">
    <property type="gene designation" value="CYP710A3"/>
</dbReference>
<dbReference type="eggNOG" id="KOG0157">
    <property type="taxonomic scope" value="Eukaryota"/>
</dbReference>
<dbReference type="HOGENOM" id="CLU_023517_1_0_1"/>
<dbReference type="InParanoid" id="Q9ZV29"/>
<dbReference type="OMA" id="IMDAWIL"/>
<dbReference type="PhylomeDB" id="Q9ZV29"/>
<dbReference type="PRO" id="PR:Q9ZV29"/>
<dbReference type="Proteomes" id="UP000006548">
    <property type="component" value="Chromosome 2"/>
</dbReference>
<dbReference type="ExpressionAtlas" id="Q9ZV29">
    <property type="expression patterns" value="baseline and differential"/>
</dbReference>
<dbReference type="GO" id="GO:0016020">
    <property type="term" value="C:membrane"/>
    <property type="evidence" value="ECO:0007669"/>
    <property type="project" value="UniProtKB-SubCell"/>
</dbReference>
<dbReference type="GO" id="GO:0000249">
    <property type="term" value="F:C-22 sterol desaturase (NADPH) activity"/>
    <property type="evidence" value="ECO:0007669"/>
    <property type="project" value="UniProtKB-EC"/>
</dbReference>
<dbReference type="GO" id="GO:0020037">
    <property type="term" value="F:heme binding"/>
    <property type="evidence" value="ECO:0007669"/>
    <property type="project" value="InterPro"/>
</dbReference>
<dbReference type="GO" id="GO:0005506">
    <property type="term" value="F:iron ion binding"/>
    <property type="evidence" value="ECO:0007669"/>
    <property type="project" value="InterPro"/>
</dbReference>
<dbReference type="GO" id="GO:0004497">
    <property type="term" value="F:monooxygenase activity"/>
    <property type="evidence" value="ECO:0007669"/>
    <property type="project" value="UniProtKB-KW"/>
</dbReference>
<dbReference type="GO" id="GO:0016126">
    <property type="term" value="P:sterol biosynthetic process"/>
    <property type="evidence" value="ECO:0007669"/>
    <property type="project" value="UniProtKB-KW"/>
</dbReference>
<dbReference type="CDD" id="cd11082">
    <property type="entry name" value="CYP61_CYP710"/>
    <property type="match status" value="1"/>
</dbReference>
<dbReference type="FunFam" id="1.10.630.10:FF:000021">
    <property type="entry name" value="Cytochrome P450 61"/>
    <property type="match status" value="1"/>
</dbReference>
<dbReference type="Gene3D" id="1.10.630.10">
    <property type="entry name" value="Cytochrome P450"/>
    <property type="match status" value="1"/>
</dbReference>
<dbReference type="InterPro" id="IPR001128">
    <property type="entry name" value="Cyt_P450"/>
</dbReference>
<dbReference type="InterPro" id="IPR017972">
    <property type="entry name" value="Cyt_P450_CS"/>
</dbReference>
<dbReference type="InterPro" id="IPR002401">
    <property type="entry name" value="Cyt_P450_E_grp-I"/>
</dbReference>
<dbReference type="InterPro" id="IPR036396">
    <property type="entry name" value="Cyt_P450_sf"/>
</dbReference>
<dbReference type="PANTHER" id="PTHR24286:SF228">
    <property type="entry name" value="C-22 STEROL DESATURASE ERG5"/>
    <property type="match status" value="1"/>
</dbReference>
<dbReference type="PANTHER" id="PTHR24286">
    <property type="entry name" value="CYTOCHROME P450 26"/>
    <property type="match status" value="1"/>
</dbReference>
<dbReference type="Pfam" id="PF00067">
    <property type="entry name" value="p450"/>
    <property type="match status" value="1"/>
</dbReference>
<dbReference type="PRINTS" id="PR00463">
    <property type="entry name" value="EP450I"/>
</dbReference>
<dbReference type="PRINTS" id="PR00385">
    <property type="entry name" value="P450"/>
</dbReference>
<dbReference type="SUPFAM" id="SSF48264">
    <property type="entry name" value="Cytochrome P450"/>
    <property type="match status" value="1"/>
</dbReference>
<dbReference type="PROSITE" id="PS00086">
    <property type="entry name" value="CYTOCHROME_P450"/>
    <property type="match status" value="1"/>
</dbReference>
<accession>Q9ZV29</accession>
<protein>
    <recommendedName>
        <fullName evidence="5">Cytochrome P450 710A3</fullName>
        <ecNumber evidence="1">1.14.19.41</ecNumber>
    </recommendedName>
    <alternativeName>
        <fullName evidence="5">C-22 sterol desaturase</fullName>
    </alternativeName>
</protein>
<keyword id="KW-0349">Heme</keyword>
<keyword id="KW-0408">Iron</keyword>
<keyword id="KW-0444">Lipid biosynthesis</keyword>
<keyword id="KW-0443">Lipid metabolism</keyword>
<keyword id="KW-0472">Membrane</keyword>
<keyword id="KW-0479">Metal-binding</keyword>
<keyword id="KW-0503">Monooxygenase</keyword>
<keyword id="KW-0521">NADP</keyword>
<keyword id="KW-0560">Oxidoreductase</keyword>
<keyword id="KW-1185">Reference proteome</keyword>
<keyword id="KW-0752">Steroid biosynthesis</keyword>
<keyword id="KW-0753">Steroid metabolism</keyword>
<keyword id="KW-0756">Sterol biosynthesis</keyword>
<keyword id="KW-1207">Sterol metabolism</keyword>
<keyword id="KW-0812">Transmembrane</keyword>
<keyword id="KW-1133">Transmembrane helix</keyword>
<feature type="chain" id="PRO_0000435505" description="Cytochrome P450 710A3">
    <location>
        <begin position="1"/>
        <end position="493"/>
    </location>
</feature>
<feature type="transmembrane region" description="Helical" evidence="3">
    <location>
        <begin position="5"/>
        <end position="25"/>
    </location>
</feature>
<feature type="binding site" description="axial binding residue" evidence="2">
    <location>
        <position position="435"/>
    </location>
    <ligand>
        <name>heme</name>
        <dbReference type="ChEBI" id="CHEBI:30413"/>
    </ligand>
    <ligandPart>
        <name>Fe</name>
        <dbReference type="ChEBI" id="CHEBI:18248"/>
    </ligandPart>
</feature>
<proteinExistence type="evidence at transcript level"/>
<name>C7103_ARATH</name>
<reference key="1">
    <citation type="journal article" date="1999" name="Nature">
        <title>Sequence and analysis of chromosome 2 of the plant Arabidopsis thaliana.</title>
        <authorList>
            <person name="Lin X."/>
            <person name="Kaul S."/>
            <person name="Rounsley S.D."/>
            <person name="Shea T.P."/>
            <person name="Benito M.-I."/>
            <person name="Town C.D."/>
            <person name="Fujii C.Y."/>
            <person name="Mason T.M."/>
            <person name="Bowman C.L."/>
            <person name="Barnstead M.E."/>
            <person name="Feldblyum T.V."/>
            <person name="Buell C.R."/>
            <person name="Ketchum K.A."/>
            <person name="Lee J.J."/>
            <person name="Ronning C.M."/>
            <person name="Koo H.L."/>
            <person name="Moffat K.S."/>
            <person name="Cronin L.A."/>
            <person name="Shen M."/>
            <person name="Pai G."/>
            <person name="Van Aken S."/>
            <person name="Umayam L."/>
            <person name="Tallon L.J."/>
            <person name="Gill J.E."/>
            <person name="Adams M.D."/>
            <person name="Carrera A.J."/>
            <person name="Creasy T.H."/>
            <person name="Goodman H.M."/>
            <person name="Somerville C.R."/>
            <person name="Copenhaver G.P."/>
            <person name="Preuss D."/>
            <person name="Nierman W.C."/>
            <person name="White O."/>
            <person name="Eisen J.A."/>
            <person name="Salzberg S.L."/>
            <person name="Fraser C.M."/>
            <person name="Venter J.C."/>
        </authorList>
    </citation>
    <scope>NUCLEOTIDE SEQUENCE [LARGE SCALE GENOMIC DNA]</scope>
    <source>
        <strain>cv. Columbia</strain>
    </source>
</reference>
<reference key="2">
    <citation type="journal article" date="2017" name="Plant J.">
        <title>Araport11: a complete reannotation of the Arabidopsis thaliana reference genome.</title>
        <authorList>
            <person name="Cheng C.Y."/>
            <person name="Krishnakumar V."/>
            <person name="Chan A.P."/>
            <person name="Thibaud-Nissen F."/>
            <person name="Schobel S."/>
            <person name="Town C.D."/>
        </authorList>
    </citation>
    <scope>GENOME REANNOTATION</scope>
    <source>
        <strain>cv. Columbia</strain>
    </source>
</reference>
<reference key="3">
    <citation type="journal article" date="2006" name="Plant Cell">
        <title>Cytochrome P450 CYP710A encodes the sterol C-22 desaturase in Arabidopsis and tomato.</title>
        <authorList>
            <person name="Morikawa T."/>
            <person name="Mizutani M."/>
            <person name="Aoki N."/>
            <person name="Watanabe B."/>
            <person name="Saga H."/>
            <person name="Saito S."/>
            <person name="Oikawa A."/>
            <person name="Suzuki H."/>
            <person name="Sakurai N."/>
            <person name="Shibata D."/>
            <person name="Wadano A."/>
            <person name="Sakata K."/>
            <person name="Ohta D."/>
        </authorList>
    </citation>
    <scope>GENE FAMILY</scope>
    <scope>NOMENCLATURE</scope>
    <scope>TISSUE SPECIFICITY</scope>
</reference>
<gene>
    <name evidence="5" type="primary">CYP710A3</name>
    <name evidence="7" type="ordered locus">At2g28850</name>
    <name evidence="8" type="ORF">F8N16.14</name>
</gene>
<comment type="function">
    <text evidence="1">Required to form the C-22 double bond in the sterol side chain. Possesses in vitro C-22 desaturase activity toward beta-sitosterol and produces stigmasterol.</text>
</comment>
<comment type="catalytic activity">
    <reaction evidence="1">
        <text>5-dehydroepisterol + NADPH + O2 + H(+) = ergosta-5,7,22,24(28)-tetraen-3beta-ol + NADP(+) + 2 H2O</text>
        <dbReference type="Rhea" id="RHEA:33467"/>
        <dbReference type="ChEBI" id="CHEBI:15377"/>
        <dbReference type="ChEBI" id="CHEBI:15378"/>
        <dbReference type="ChEBI" id="CHEBI:15379"/>
        <dbReference type="ChEBI" id="CHEBI:18249"/>
        <dbReference type="ChEBI" id="CHEBI:52972"/>
        <dbReference type="ChEBI" id="CHEBI:57783"/>
        <dbReference type="ChEBI" id="CHEBI:58349"/>
        <dbReference type="EC" id="1.14.19.41"/>
    </reaction>
</comment>
<comment type="cofactor">
    <cofactor evidence="2">
        <name>heme</name>
        <dbReference type="ChEBI" id="CHEBI:30413"/>
    </cofactor>
</comment>
<comment type="subcellular location">
    <subcellularLocation>
        <location evidence="3">Membrane</location>
        <topology evidence="3">Single-pass membrane protein</topology>
    </subcellularLocation>
</comment>
<comment type="tissue specificity">
    <text evidence="4">Expressed in stems. Detected in primary root caps and immature petals.</text>
</comment>
<comment type="similarity">
    <text evidence="6">Belongs to the cytochrome P450 family.</text>
</comment>
<sequence length="493" mass="55874">MVSSVSLFASLTPYLVSALLLFLLLEQLFYRLKKRNLPGPLFVFPIIGNVVALIRDPTSFWDKQSAMADTSVGLSVNYLIGKFIIYIKDAELSNKVFSNIRPDAFQLVGHPFGKKLFGDHSLIFMFGENHKSVRRQVAPNFTRKPLSAYSSLQQIVILRHLRQWEESFSSGSRPVSMRQLIRELNLETSQTVFVGPYLDKEVKNTIRDDYNVFNPGTMALPIDLPGFTFGEARRAVSRLVNTMSLCVRKSKEKMAAGENPTCLVDFWTHSIVAESPPPPHSKDEEISCVLVDFLFASQDASTSSLLWAVVLLESEPEVLRRVREDVARFWSPESKESITADQLAEMKYIRAVAREVLRYRPPASMVPHVAVSDFRLTESYTIPKGTIVFPSLFDASFQGFTEPDRFDPDRFSETRQEDEVFKRNFLTFGIGSHQCVGQRYALNHLVLFIAMFSSMFDFKRVRSDGCDEIVHIPTMSPKDGCTVFLSSRLVTSP</sequence>
<evidence type="ECO:0000250" key="1">
    <source>
        <dbReference type="UniProtKB" id="O64697"/>
    </source>
</evidence>
<evidence type="ECO:0000250" key="2">
    <source>
        <dbReference type="UniProtKB" id="P04798"/>
    </source>
</evidence>
<evidence type="ECO:0000255" key="3"/>
<evidence type="ECO:0000269" key="4">
    <source>
    </source>
</evidence>
<evidence type="ECO:0000303" key="5">
    <source>
    </source>
</evidence>
<evidence type="ECO:0000305" key="6"/>
<evidence type="ECO:0000312" key="7">
    <source>
        <dbReference type="Araport" id="AT2G28850"/>
    </source>
</evidence>
<evidence type="ECO:0000312" key="8">
    <source>
        <dbReference type="EMBL" id="AAC79589.1"/>
    </source>
</evidence>
<organism>
    <name type="scientific">Arabidopsis thaliana</name>
    <name type="common">Mouse-ear cress</name>
    <dbReference type="NCBI Taxonomy" id="3702"/>
    <lineage>
        <taxon>Eukaryota</taxon>
        <taxon>Viridiplantae</taxon>
        <taxon>Streptophyta</taxon>
        <taxon>Embryophyta</taxon>
        <taxon>Tracheophyta</taxon>
        <taxon>Spermatophyta</taxon>
        <taxon>Magnoliopsida</taxon>
        <taxon>eudicotyledons</taxon>
        <taxon>Gunneridae</taxon>
        <taxon>Pentapetalae</taxon>
        <taxon>rosids</taxon>
        <taxon>malvids</taxon>
        <taxon>Brassicales</taxon>
        <taxon>Brassicaceae</taxon>
        <taxon>Camelineae</taxon>
        <taxon>Arabidopsis</taxon>
    </lineage>
</organism>